<evidence type="ECO:0000255" key="1">
    <source>
        <dbReference type="HAMAP-Rule" id="MF_01321"/>
    </source>
</evidence>
<accession>A3PGI9</accession>
<proteinExistence type="inferred from homology"/>
<feature type="chain" id="PRO_0000300384" description="DNA-directed RNA polymerase subunit beta">
    <location>
        <begin position="1"/>
        <end position="1377"/>
    </location>
</feature>
<sequence length="1377" mass="153818">MAQSYVGQKRIRRYYGKIREVLEMPNLIEVQKSSYDLFLKSGDGPKAADGEGIQGVFQSVFPIKDFNETAVLEFVKYELEKPKYDVDECQQRDMTYAAPLKVTLRLIVFDVDETTGARSVKDIKEQDVYMGDMPLMTANGTFIVNGTERVIVSQMHRSPGVFFDHDKGKTHSSGKLLFACRIIPYRGSWLDFEFDAKDIVFARIDRRRKLPVTTLLYALGMDQEGIMDAYYETVNFKHQKNRGWVTRFFPERVRGTRPTYDLVDAATGEVILKAGEKATPRMVKKWIDEAQITELLVPFDHIVGRYVAQDIINEETGEIWVEAGDELTMEYDRDGEVKGGTLKLLLDQGITDIPVLDIDNVNVGPYIRNTMAADKNMGRDTALMDIYRVMRPGEPPTVEAASNLFDTLFFDSERYDLSAVGRVKMNMRLDLGKPDTQRTLDRDDIIACIKALTELRDGKGEIDDIDHLGNRRVRSVGELMENQYRVGLLRMERAIKERMSSVEIDTIMPQDLINAKPAAAAVREFFGSSQLSQFMDQTNPLSEVTHKRRLSALGPGGLTRERAGFEVRDVHPTHYGRMCPIETPEGQNIGLINSLATFARVNKYGFIETPYRKVVEGAVTDDVVYMSATEEMRHTVAQANAQLDEEGRFVSDLISSRKAGEFMLNPPDAIDLIDVSPKQLVSVAASLIPFLENDDANRALMGSNMQRQAVPLLQSDAPFVGTGIEAVVARDSGAAIMARRAGVIDQVDATRIVVRATEMLEPGEPGVDIYRLRKFKRSNQSSCINQRPLVKVGDVVHRGEVVADGPCTDMGELALGRNVIVAFMPWNGYNYEDSILISERILRDDVYTSIHIEEYEVAARDTKLGPEEITRDIPNVGEEALRNLDEAGIVYIGAEVQPGDILVGKITPKGESPMTPEEKLLRAIFGEKASDVRDTSLRLPPGAYGTIVEVRVFNRHGVDKDERALQIEREEVERLARDRDDELAILERNIYSRLRTLIMGKTAVKGPKGIRAGSEINEDLLSTLSRGQWWQLALGEEADAKEVEALHEQFEAQKRALDHRFEDKVEKVRRGDDLPPGVMKMVKVFVAVKRKLQPGDKMAGRHGNKGVISKVVPIEDMPFLADGTHVDLVLNPLGVPSRMNVGQILETHMGWAARGLGIKIDEALQDYRRSGDLTPVKEAMRLAYGDETYEGAFGDREDEDLVEMAGRVTKGVPIATPVFDGAKEPDVNDALRRAGFDQSGQSIVFDGRTGEQFARPVTVGVKYMLKLHHLVDDKLHARSTGPYSLVTQQPLGGKAQFGGQRLGEMEVWALEAYGAAYTLQEMLTVKSDDVAGRTKMYESIVKGEDNFEAGVPESFNVLVKEVRGLGLNMELLDADEE</sequence>
<gene>
    <name evidence="1" type="primary">rpoB1</name>
    <name type="ordered locus">Rsph17029_0339</name>
</gene>
<gene>
    <name evidence="1" type="primary">rpoB2</name>
    <name type="ordered locus">Rsph17029_0353</name>
</gene>
<protein>
    <recommendedName>
        <fullName evidence="1">DNA-directed RNA polymerase subunit beta</fullName>
        <shortName evidence="1">RNAP subunit beta</shortName>
        <ecNumber evidence="1">2.7.7.6</ecNumber>
    </recommendedName>
    <alternativeName>
        <fullName evidence="1">RNA polymerase subunit beta</fullName>
    </alternativeName>
    <alternativeName>
        <fullName evidence="1">Transcriptase subunit beta</fullName>
    </alternativeName>
</protein>
<comment type="function">
    <text evidence="1">DNA-dependent RNA polymerase catalyzes the transcription of DNA into RNA using the four ribonucleoside triphosphates as substrates.</text>
</comment>
<comment type="catalytic activity">
    <reaction evidence="1">
        <text>RNA(n) + a ribonucleoside 5'-triphosphate = RNA(n+1) + diphosphate</text>
        <dbReference type="Rhea" id="RHEA:21248"/>
        <dbReference type="Rhea" id="RHEA-COMP:14527"/>
        <dbReference type="Rhea" id="RHEA-COMP:17342"/>
        <dbReference type="ChEBI" id="CHEBI:33019"/>
        <dbReference type="ChEBI" id="CHEBI:61557"/>
        <dbReference type="ChEBI" id="CHEBI:140395"/>
        <dbReference type="EC" id="2.7.7.6"/>
    </reaction>
</comment>
<comment type="subunit">
    <text evidence="1">The RNAP catalytic core consists of 2 alpha, 1 beta, 1 beta' and 1 omega subunit. When a sigma factor is associated with the core the holoenzyme is formed, which can initiate transcription.</text>
</comment>
<comment type="similarity">
    <text evidence="1">Belongs to the RNA polymerase beta chain family.</text>
</comment>
<keyword id="KW-0240">DNA-directed RNA polymerase</keyword>
<keyword id="KW-0548">Nucleotidyltransferase</keyword>
<keyword id="KW-0804">Transcription</keyword>
<keyword id="KW-0808">Transferase</keyword>
<name>RPOB_CERS1</name>
<dbReference type="EC" id="2.7.7.6" evidence="1"/>
<dbReference type="EMBL" id="CP000577">
    <property type="protein sequence ID" value="ABN75455.1"/>
    <property type="molecule type" value="Genomic_DNA"/>
</dbReference>
<dbReference type="EMBL" id="CP000577">
    <property type="protein sequence ID" value="ABN75469.1"/>
    <property type="molecule type" value="Genomic_DNA"/>
</dbReference>
<dbReference type="SMR" id="A3PGI9"/>
<dbReference type="KEGG" id="rsh:Rsph17029_0339"/>
<dbReference type="KEGG" id="rsh:Rsph17029_0353"/>
<dbReference type="HOGENOM" id="CLU_000524_4_0_5"/>
<dbReference type="GO" id="GO:0000428">
    <property type="term" value="C:DNA-directed RNA polymerase complex"/>
    <property type="evidence" value="ECO:0007669"/>
    <property type="project" value="UniProtKB-KW"/>
</dbReference>
<dbReference type="GO" id="GO:0003677">
    <property type="term" value="F:DNA binding"/>
    <property type="evidence" value="ECO:0007669"/>
    <property type="project" value="UniProtKB-UniRule"/>
</dbReference>
<dbReference type="GO" id="GO:0003899">
    <property type="term" value="F:DNA-directed RNA polymerase activity"/>
    <property type="evidence" value="ECO:0007669"/>
    <property type="project" value="UniProtKB-UniRule"/>
</dbReference>
<dbReference type="GO" id="GO:0032549">
    <property type="term" value="F:ribonucleoside binding"/>
    <property type="evidence" value="ECO:0007669"/>
    <property type="project" value="InterPro"/>
</dbReference>
<dbReference type="GO" id="GO:0006351">
    <property type="term" value="P:DNA-templated transcription"/>
    <property type="evidence" value="ECO:0007669"/>
    <property type="project" value="UniProtKB-UniRule"/>
</dbReference>
<dbReference type="CDD" id="cd00653">
    <property type="entry name" value="RNA_pol_B_RPB2"/>
    <property type="match status" value="1"/>
</dbReference>
<dbReference type="FunFam" id="3.90.1800.10:FF:000001">
    <property type="entry name" value="DNA-directed RNA polymerase subunit beta"/>
    <property type="match status" value="1"/>
</dbReference>
<dbReference type="Gene3D" id="2.40.50.100">
    <property type="match status" value="1"/>
</dbReference>
<dbReference type="Gene3D" id="2.40.50.150">
    <property type="match status" value="1"/>
</dbReference>
<dbReference type="Gene3D" id="3.90.1100.10">
    <property type="match status" value="2"/>
</dbReference>
<dbReference type="Gene3D" id="2.30.150.10">
    <property type="entry name" value="DNA-directed RNA polymerase, beta subunit, external 1 domain"/>
    <property type="match status" value="1"/>
</dbReference>
<dbReference type="Gene3D" id="2.40.270.10">
    <property type="entry name" value="DNA-directed RNA polymerase, subunit 2, domain 6"/>
    <property type="match status" value="1"/>
</dbReference>
<dbReference type="Gene3D" id="3.90.1800.10">
    <property type="entry name" value="RNA polymerase alpha subunit dimerisation domain"/>
    <property type="match status" value="1"/>
</dbReference>
<dbReference type="Gene3D" id="3.90.1110.10">
    <property type="entry name" value="RNA polymerase Rpb2, domain 2"/>
    <property type="match status" value="1"/>
</dbReference>
<dbReference type="HAMAP" id="MF_01321">
    <property type="entry name" value="RNApol_bact_RpoB"/>
    <property type="match status" value="1"/>
</dbReference>
<dbReference type="InterPro" id="IPR042107">
    <property type="entry name" value="DNA-dir_RNA_pol_bsu_ext_1_sf"/>
</dbReference>
<dbReference type="InterPro" id="IPR019462">
    <property type="entry name" value="DNA-dir_RNA_pol_bsu_external_1"/>
</dbReference>
<dbReference type="InterPro" id="IPR015712">
    <property type="entry name" value="DNA-dir_RNA_pol_su2"/>
</dbReference>
<dbReference type="InterPro" id="IPR007120">
    <property type="entry name" value="DNA-dir_RNAP_su2_dom"/>
</dbReference>
<dbReference type="InterPro" id="IPR037033">
    <property type="entry name" value="DNA-dir_RNAP_su2_hyb_sf"/>
</dbReference>
<dbReference type="InterPro" id="IPR010243">
    <property type="entry name" value="RNA_pol_bsu_bac"/>
</dbReference>
<dbReference type="InterPro" id="IPR007121">
    <property type="entry name" value="RNA_pol_bsu_CS"/>
</dbReference>
<dbReference type="InterPro" id="IPR007644">
    <property type="entry name" value="RNA_pol_bsu_protrusion"/>
</dbReference>
<dbReference type="InterPro" id="IPR007642">
    <property type="entry name" value="RNA_pol_Rpb2_2"/>
</dbReference>
<dbReference type="InterPro" id="IPR037034">
    <property type="entry name" value="RNA_pol_Rpb2_2_sf"/>
</dbReference>
<dbReference type="InterPro" id="IPR007645">
    <property type="entry name" value="RNA_pol_Rpb2_3"/>
</dbReference>
<dbReference type="InterPro" id="IPR007641">
    <property type="entry name" value="RNA_pol_Rpb2_7"/>
</dbReference>
<dbReference type="InterPro" id="IPR014724">
    <property type="entry name" value="RNA_pol_RPB2_OB-fold"/>
</dbReference>
<dbReference type="NCBIfam" id="NF001616">
    <property type="entry name" value="PRK00405.1"/>
    <property type="match status" value="1"/>
</dbReference>
<dbReference type="NCBIfam" id="TIGR02013">
    <property type="entry name" value="rpoB"/>
    <property type="match status" value="1"/>
</dbReference>
<dbReference type="PANTHER" id="PTHR20856">
    <property type="entry name" value="DNA-DIRECTED RNA POLYMERASE I SUBUNIT 2"/>
    <property type="match status" value="1"/>
</dbReference>
<dbReference type="Pfam" id="PF04563">
    <property type="entry name" value="RNA_pol_Rpb2_1"/>
    <property type="match status" value="1"/>
</dbReference>
<dbReference type="Pfam" id="PF04561">
    <property type="entry name" value="RNA_pol_Rpb2_2"/>
    <property type="match status" value="2"/>
</dbReference>
<dbReference type="Pfam" id="PF04565">
    <property type="entry name" value="RNA_pol_Rpb2_3"/>
    <property type="match status" value="1"/>
</dbReference>
<dbReference type="Pfam" id="PF10385">
    <property type="entry name" value="RNA_pol_Rpb2_45"/>
    <property type="match status" value="1"/>
</dbReference>
<dbReference type="Pfam" id="PF00562">
    <property type="entry name" value="RNA_pol_Rpb2_6"/>
    <property type="match status" value="1"/>
</dbReference>
<dbReference type="Pfam" id="PF04560">
    <property type="entry name" value="RNA_pol_Rpb2_7"/>
    <property type="match status" value="1"/>
</dbReference>
<dbReference type="SUPFAM" id="SSF64484">
    <property type="entry name" value="beta and beta-prime subunits of DNA dependent RNA-polymerase"/>
    <property type="match status" value="1"/>
</dbReference>
<dbReference type="PROSITE" id="PS01166">
    <property type="entry name" value="RNA_POL_BETA"/>
    <property type="match status" value="1"/>
</dbReference>
<organism>
    <name type="scientific">Cereibacter sphaeroides (strain ATCC 17029 / ATH 2.4.9)</name>
    <name type="common">Rhodobacter sphaeroides</name>
    <dbReference type="NCBI Taxonomy" id="349101"/>
    <lineage>
        <taxon>Bacteria</taxon>
        <taxon>Pseudomonadati</taxon>
        <taxon>Pseudomonadota</taxon>
        <taxon>Alphaproteobacteria</taxon>
        <taxon>Rhodobacterales</taxon>
        <taxon>Paracoccaceae</taxon>
        <taxon>Cereibacter</taxon>
    </lineage>
</organism>
<reference key="1">
    <citation type="submission" date="2007-02" db="EMBL/GenBank/DDBJ databases">
        <title>Complete sequence of chromosome 1 of Rhodobacter sphaeroides ATCC 17029.</title>
        <authorList>
            <person name="Copeland A."/>
            <person name="Lucas S."/>
            <person name="Lapidus A."/>
            <person name="Barry K."/>
            <person name="Detter J.C."/>
            <person name="Glavina del Rio T."/>
            <person name="Hammon N."/>
            <person name="Israni S."/>
            <person name="Dalin E."/>
            <person name="Tice H."/>
            <person name="Pitluck S."/>
            <person name="Kiss H."/>
            <person name="Brettin T."/>
            <person name="Bruce D."/>
            <person name="Han C."/>
            <person name="Tapia R."/>
            <person name="Gilna P."/>
            <person name="Schmutz J."/>
            <person name="Larimer F."/>
            <person name="Land M."/>
            <person name="Hauser L."/>
            <person name="Kyrpides N."/>
            <person name="Mikhailova N."/>
            <person name="Richardson P."/>
            <person name="Mackenzie C."/>
            <person name="Choudhary M."/>
            <person name="Donohue T.J."/>
            <person name="Kaplan S."/>
        </authorList>
    </citation>
    <scope>NUCLEOTIDE SEQUENCE [LARGE SCALE GENOMIC DNA]</scope>
    <source>
        <strain>ATCC 17029 / ATH 2.4.9</strain>
    </source>
</reference>